<comment type="function">
    <text evidence="1">Catalyzes the reductive methylation of 2'-deoxyuridine-5'-monophosphate (dUMP) to 2'-deoxythymidine-5'-monophosphate (dTMP) while utilizing 5,10-methylenetetrahydrofolate (mTHF) as the methyl donor and reductant in the reaction, yielding dihydrofolate (DHF) as a by-product. This enzymatic reaction provides an intracellular de novo source of dTMP, an essential precursor for DNA biosynthesis.</text>
</comment>
<comment type="catalytic activity">
    <reaction evidence="1">
        <text>dUMP + (6R)-5,10-methylene-5,6,7,8-tetrahydrofolate = 7,8-dihydrofolate + dTMP</text>
        <dbReference type="Rhea" id="RHEA:12104"/>
        <dbReference type="ChEBI" id="CHEBI:15636"/>
        <dbReference type="ChEBI" id="CHEBI:57451"/>
        <dbReference type="ChEBI" id="CHEBI:63528"/>
        <dbReference type="ChEBI" id="CHEBI:246422"/>
        <dbReference type="EC" id="2.1.1.45"/>
    </reaction>
</comment>
<comment type="pathway">
    <text evidence="1">Pyrimidine metabolism; dTTP biosynthesis.</text>
</comment>
<comment type="subunit">
    <text evidence="1">Homodimer.</text>
</comment>
<comment type="subcellular location">
    <subcellularLocation>
        <location evidence="1">Cytoplasm</location>
    </subcellularLocation>
</comment>
<comment type="similarity">
    <text evidence="1">Belongs to the thymidylate synthase family. Bacterial-type ThyA subfamily.</text>
</comment>
<feature type="chain" id="PRO_0000140921" description="Thymidylate synthase">
    <location>
        <begin position="1"/>
        <end position="318"/>
    </location>
</feature>
<feature type="active site" description="Nucleophile" evidence="1">
    <location>
        <position position="200"/>
    </location>
</feature>
<feature type="binding site" description="in other chain" evidence="1">
    <location>
        <position position="25"/>
    </location>
    <ligand>
        <name>dUMP</name>
        <dbReference type="ChEBI" id="CHEBI:246422"/>
        <note>ligand shared between dimeric partners</note>
    </ligand>
</feature>
<feature type="binding site" evidence="1">
    <location>
        <begin position="180"/>
        <end position="181"/>
    </location>
    <ligand>
        <name>dUMP</name>
        <dbReference type="ChEBI" id="CHEBI:246422"/>
        <note>ligand shared between dimeric partners</note>
    </ligand>
</feature>
<feature type="binding site" description="in other chain" evidence="1">
    <location>
        <begin position="220"/>
        <end position="223"/>
    </location>
    <ligand>
        <name>dUMP</name>
        <dbReference type="ChEBI" id="CHEBI:246422"/>
        <note>ligand shared between dimeric partners</note>
    </ligand>
</feature>
<feature type="binding site" evidence="1">
    <location>
        <position position="223"/>
    </location>
    <ligand>
        <name>(6R)-5,10-methylene-5,6,7,8-tetrahydrofolate</name>
        <dbReference type="ChEBI" id="CHEBI:15636"/>
    </ligand>
</feature>
<feature type="binding site" description="in other chain" evidence="1">
    <location>
        <position position="231"/>
    </location>
    <ligand>
        <name>dUMP</name>
        <dbReference type="ChEBI" id="CHEBI:246422"/>
        <note>ligand shared between dimeric partners</note>
    </ligand>
</feature>
<feature type="binding site" description="in other chain" evidence="1">
    <location>
        <begin position="261"/>
        <end position="263"/>
    </location>
    <ligand>
        <name>dUMP</name>
        <dbReference type="ChEBI" id="CHEBI:246422"/>
        <note>ligand shared between dimeric partners</note>
    </ligand>
</feature>
<feature type="binding site" evidence="1">
    <location>
        <position position="317"/>
    </location>
    <ligand>
        <name>(6R)-5,10-methylene-5,6,7,8-tetrahydrofolate</name>
        <dbReference type="ChEBI" id="CHEBI:15636"/>
    </ligand>
</feature>
<protein>
    <recommendedName>
        <fullName evidence="1">Thymidylate synthase</fullName>
        <shortName evidence="1">TS</shortName>
        <shortName evidence="1">TSase</shortName>
        <ecNumber evidence="1">2.1.1.45</ecNumber>
    </recommendedName>
</protein>
<evidence type="ECO:0000255" key="1">
    <source>
        <dbReference type="HAMAP-Rule" id="MF_00008"/>
    </source>
</evidence>
<name>TYSY_BACCR</name>
<proteinExistence type="inferred from homology"/>
<keyword id="KW-0963">Cytoplasm</keyword>
<keyword id="KW-0489">Methyltransferase</keyword>
<keyword id="KW-0545">Nucleotide biosynthesis</keyword>
<keyword id="KW-1185">Reference proteome</keyword>
<keyword id="KW-0808">Transferase</keyword>
<dbReference type="EC" id="2.1.1.45" evidence="1"/>
<dbReference type="EMBL" id="AE016877">
    <property type="protein sequence ID" value="AAP09157.1"/>
    <property type="molecule type" value="Genomic_DNA"/>
</dbReference>
<dbReference type="RefSeq" id="NP_831956.1">
    <property type="nucleotide sequence ID" value="NC_004722.1"/>
</dbReference>
<dbReference type="RefSeq" id="WP_000679609.1">
    <property type="nucleotide sequence ID" value="NZ_CP138336.1"/>
</dbReference>
<dbReference type="SMR" id="Q81E05"/>
<dbReference type="STRING" id="226900.BC_2191"/>
<dbReference type="KEGG" id="bce:BC2191"/>
<dbReference type="PATRIC" id="fig|226900.8.peg.2213"/>
<dbReference type="HOGENOM" id="CLU_021669_0_2_9"/>
<dbReference type="OrthoDB" id="9774633at2"/>
<dbReference type="UniPathway" id="UPA00575"/>
<dbReference type="Proteomes" id="UP000001417">
    <property type="component" value="Chromosome"/>
</dbReference>
<dbReference type="GO" id="GO:0005829">
    <property type="term" value="C:cytosol"/>
    <property type="evidence" value="ECO:0000318"/>
    <property type="project" value="GO_Central"/>
</dbReference>
<dbReference type="GO" id="GO:0004799">
    <property type="term" value="F:thymidylate synthase activity"/>
    <property type="evidence" value="ECO:0000318"/>
    <property type="project" value="GO_Central"/>
</dbReference>
<dbReference type="GO" id="GO:0006231">
    <property type="term" value="P:dTMP biosynthetic process"/>
    <property type="evidence" value="ECO:0000318"/>
    <property type="project" value="GO_Central"/>
</dbReference>
<dbReference type="GO" id="GO:0006235">
    <property type="term" value="P:dTTP biosynthetic process"/>
    <property type="evidence" value="ECO:0007669"/>
    <property type="project" value="UniProtKB-UniRule"/>
</dbReference>
<dbReference type="GO" id="GO:0032259">
    <property type="term" value="P:methylation"/>
    <property type="evidence" value="ECO:0007669"/>
    <property type="project" value="UniProtKB-KW"/>
</dbReference>
<dbReference type="CDD" id="cd00351">
    <property type="entry name" value="TS_Pyrimidine_HMase"/>
    <property type="match status" value="1"/>
</dbReference>
<dbReference type="Gene3D" id="3.30.572.10">
    <property type="entry name" value="Thymidylate synthase/dCMP hydroxymethylase domain"/>
    <property type="match status" value="1"/>
</dbReference>
<dbReference type="HAMAP" id="MF_00008">
    <property type="entry name" value="Thymidy_synth_bact"/>
    <property type="match status" value="1"/>
</dbReference>
<dbReference type="InterPro" id="IPR045097">
    <property type="entry name" value="Thymidate_synth/dCMP_Mease"/>
</dbReference>
<dbReference type="InterPro" id="IPR023451">
    <property type="entry name" value="Thymidate_synth/dCMP_Mease_dom"/>
</dbReference>
<dbReference type="InterPro" id="IPR036926">
    <property type="entry name" value="Thymidate_synth/dCMP_Mease_sf"/>
</dbReference>
<dbReference type="InterPro" id="IPR000398">
    <property type="entry name" value="Thymidylate_synthase"/>
</dbReference>
<dbReference type="InterPro" id="IPR020940">
    <property type="entry name" value="Thymidylate_synthase_AS"/>
</dbReference>
<dbReference type="NCBIfam" id="NF002496">
    <property type="entry name" value="PRK01827.1-2"/>
    <property type="match status" value="1"/>
</dbReference>
<dbReference type="NCBIfam" id="TIGR03284">
    <property type="entry name" value="thym_sym"/>
    <property type="match status" value="1"/>
</dbReference>
<dbReference type="PANTHER" id="PTHR11548:SF9">
    <property type="entry name" value="THYMIDYLATE SYNTHASE"/>
    <property type="match status" value="1"/>
</dbReference>
<dbReference type="PANTHER" id="PTHR11548">
    <property type="entry name" value="THYMIDYLATE SYNTHASE 1"/>
    <property type="match status" value="1"/>
</dbReference>
<dbReference type="Pfam" id="PF00303">
    <property type="entry name" value="Thymidylat_synt"/>
    <property type="match status" value="1"/>
</dbReference>
<dbReference type="PRINTS" id="PR00108">
    <property type="entry name" value="THYMDSNTHASE"/>
</dbReference>
<dbReference type="SUPFAM" id="SSF55831">
    <property type="entry name" value="Thymidylate synthase/dCMP hydroxymethylase"/>
    <property type="match status" value="1"/>
</dbReference>
<dbReference type="PROSITE" id="PS00091">
    <property type="entry name" value="THYMIDYLATE_SYNTHASE"/>
    <property type="match status" value="1"/>
</dbReference>
<reference key="1">
    <citation type="journal article" date="2003" name="Nature">
        <title>Genome sequence of Bacillus cereus and comparative analysis with Bacillus anthracis.</title>
        <authorList>
            <person name="Ivanova N."/>
            <person name="Sorokin A."/>
            <person name="Anderson I."/>
            <person name="Galleron N."/>
            <person name="Candelon B."/>
            <person name="Kapatral V."/>
            <person name="Bhattacharyya A."/>
            <person name="Reznik G."/>
            <person name="Mikhailova N."/>
            <person name="Lapidus A."/>
            <person name="Chu L."/>
            <person name="Mazur M."/>
            <person name="Goltsman E."/>
            <person name="Larsen N."/>
            <person name="D'Souza M."/>
            <person name="Walunas T."/>
            <person name="Grechkin Y."/>
            <person name="Pusch G."/>
            <person name="Haselkorn R."/>
            <person name="Fonstein M."/>
            <person name="Ehrlich S.D."/>
            <person name="Overbeek R."/>
            <person name="Kyrpides N.C."/>
        </authorList>
    </citation>
    <scope>NUCLEOTIDE SEQUENCE [LARGE SCALE GENOMIC DNA]</scope>
    <source>
        <strain>ATCC 14579 / DSM 31 / CCUG 7414 / JCM 2152 / NBRC 15305 / NCIMB 9373 / NCTC 2599 / NRRL B-3711</strain>
    </source>
</reference>
<gene>
    <name evidence="1" type="primary">thyA</name>
    <name type="ordered locus">BC_2191</name>
</gene>
<sequence>MKHAENEYLNLCRHVMEHGTKKEDRTGTGTVSVFGYQMRFDLSKGFPLLTTKRVPFRLVASELLWFMKGDTNIRYLLQHNNNIWNEWAFKSWVESDEYTGPDMTDFGLRSQQDEEFKVQYDEQMELFKKNVLEDDEFSNKYGYLGDVYGKQWRAWKTTAGETLDQLKDVIEMIKKTPDSRRLIVSAWNPEDVPSMALPPCHTLFQFYVADGKLSCQLYQRSGDIFLGIPFNIASYSLLTHLIAHECGLEVGEFVHTIGDAHIYTNHFEQVEKQLAREPRPFPKLTLNPDVKSVFDFEMEDLTIEGYDPHPAIKAPVAV</sequence>
<organism>
    <name type="scientific">Bacillus cereus (strain ATCC 14579 / DSM 31 / CCUG 7414 / JCM 2152 / NBRC 15305 / NCIMB 9373 / NCTC 2599 / NRRL B-3711)</name>
    <dbReference type="NCBI Taxonomy" id="226900"/>
    <lineage>
        <taxon>Bacteria</taxon>
        <taxon>Bacillati</taxon>
        <taxon>Bacillota</taxon>
        <taxon>Bacilli</taxon>
        <taxon>Bacillales</taxon>
        <taxon>Bacillaceae</taxon>
        <taxon>Bacillus</taxon>
        <taxon>Bacillus cereus group</taxon>
    </lineage>
</organism>
<accession>Q81E05</accession>